<protein>
    <recommendedName>
        <fullName evidence="1">Protein-L-isoaspartate O-methyltransferase</fullName>
        <ecNumber evidence="1">2.1.1.77</ecNumber>
    </recommendedName>
    <alternativeName>
        <fullName evidence="1">L-isoaspartyl protein carboxyl methyltransferase</fullName>
    </alternativeName>
    <alternativeName>
        <fullName evidence="1">Protein L-isoaspartyl methyltransferase</fullName>
    </alternativeName>
    <alternativeName>
        <fullName evidence="1">Protein-beta-aspartate methyltransferase</fullName>
        <shortName evidence="1">PIMT</shortName>
    </alternativeName>
</protein>
<reference key="1">
    <citation type="submission" date="2006-09" db="EMBL/GenBank/DDBJ databases">
        <title>Complete sequence of Rhodopseudomonas palustris BisA53.</title>
        <authorList>
            <consortium name="US DOE Joint Genome Institute"/>
            <person name="Copeland A."/>
            <person name="Lucas S."/>
            <person name="Lapidus A."/>
            <person name="Barry K."/>
            <person name="Detter J.C."/>
            <person name="Glavina del Rio T."/>
            <person name="Hammon N."/>
            <person name="Israni S."/>
            <person name="Dalin E."/>
            <person name="Tice H."/>
            <person name="Pitluck S."/>
            <person name="Chain P."/>
            <person name="Malfatti S."/>
            <person name="Shin M."/>
            <person name="Vergez L."/>
            <person name="Schmutz J."/>
            <person name="Larimer F."/>
            <person name="Land M."/>
            <person name="Hauser L."/>
            <person name="Pelletier D.A."/>
            <person name="Kyrpides N."/>
            <person name="Kim E."/>
            <person name="Harwood C.S."/>
            <person name="Oda Y."/>
            <person name="Richardson P."/>
        </authorList>
    </citation>
    <scope>NUCLEOTIDE SEQUENCE [LARGE SCALE GENOMIC DNA]</scope>
    <source>
        <strain>BisA53</strain>
    </source>
</reference>
<feature type="chain" id="PRO_0000351923" description="Protein-L-isoaspartate O-methyltransferase">
    <location>
        <begin position="1"/>
        <end position="215"/>
    </location>
</feature>
<feature type="active site" evidence="1">
    <location>
        <position position="62"/>
    </location>
</feature>
<sequence>MPLAPPPEKMMFQLSLRRRGISDQAVLRAMDAVPRDLFVTPDLRDEAWRDTALPIACGQTISQPFVVAYMTEQLQLKPEHRVLEIGTGSGYQAAVLSRLCQQVLTLERFKTLADSARARLESLECHNVEVQLGDGFDVPAKAGLFDRILVTAAMEEVPGALIARLDLDGILIAPVGPHQATQTLVRIRNAKGGIERKELVAVRFVPALPGIAREL</sequence>
<name>PIMT_RHOP5</name>
<dbReference type="EC" id="2.1.1.77" evidence="1"/>
<dbReference type="EMBL" id="CP000463">
    <property type="protein sequence ID" value="ABJ06642.1"/>
    <property type="molecule type" value="Genomic_DNA"/>
</dbReference>
<dbReference type="SMR" id="Q07N42"/>
<dbReference type="STRING" id="316055.RPE_2705"/>
<dbReference type="KEGG" id="rpe:RPE_2705"/>
<dbReference type="eggNOG" id="COG2518">
    <property type="taxonomic scope" value="Bacteria"/>
</dbReference>
<dbReference type="HOGENOM" id="CLU_055432_2_0_5"/>
<dbReference type="OrthoDB" id="9810066at2"/>
<dbReference type="GO" id="GO:0005737">
    <property type="term" value="C:cytoplasm"/>
    <property type="evidence" value="ECO:0007669"/>
    <property type="project" value="UniProtKB-SubCell"/>
</dbReference>
<dbReference type="GO" id="GO:0004719">
    <property type="term" value="F:protein-L-isoaspartate (D-aspartate) O-methyltransferase activity"/>
    <property type="evidence" value="ECO:0007669"/>
    <property type="project" value="UniProtKB-UniRule"/>
</dbReference>
<dbReference type="GO" id="GO:0032259">
    <property type="term" value="P:methylation"/>
    <property type="evidence" value="ECO:0007669"/>
    <property type="project" value="UniProtKB-KW"/>
</dbReference>
<dbReference type="GO" id="GO:0036211">
    <property type="term" value="P:protein modification process"/>
    <property type="evidence" value="ECO:0007669"/>
    <property type="project" value="UniProtKB-UniRule"/>
</dbReference>
<dbReference type="GO" id="GO:0030091">
    <property type="term" value="P:protein repair"/>
    <property type="evidence" value="ECO:0007669"/>
    <property type="project" value="UniProtKB-UniRule"/>
</dbReference>
<dbReference type="CDD" id="cd02440">
    <property type="entry name" value="AdoMet_MTases"/>
    <property type="match status" value="1"/>
</dbReference>
<dbReference type="FunFam" id="3.40.50.150:FF:000010">
    <property type="entry name" value="Protein-L-isoaspartate O-methyltransferase"/>
    <property type="match status" value="1"/>
</dbReference>
<dbReference type="Gene3D" id="3.40.50.150">
    <property type="entry name" value="Vaccinia Virus protein VP39"/>
    <property type="match status" value="1"/>
</dbReference>
<dbReference type="HAMAP" id="MF_00090">
    <property type="entry name" value="PIMT"/>
    <property type="match status" value="1"/>
</dbReference>
<dbReference type="InterPro" id="IPR000682">
    <property type="entry name" value="PCMT"/>
</dbReference>
<dbReference type="InterPro" id="IPR029063">
    <property type="entry name" value="SAM-dependent_MTases_sf"/>
</dbReference>
<dbReference type="NCBIfam" id="TIGR00080">
    <property type="entry name" value="pimt"/>
    <property type="match status" value="1"/>
</dbReference>
<dbReference type="NCBIfam" id="NF001453">
    <property type="entry name" value="PRK00312.1"/>
    <property type="match status" value="1"/>
</dbReference>
<dbReference type="PANTHER" id="PTHR11579">
    <property type="entry name" value="PROTEIN-L-ISOASPARTATE O-METHYLTRANSFERASE"/>
    <property type="match status" value="1"/>
</dbReference>
<dbReference type="PANTHER" id="PTHR11579:SF0">
    <property type="entry name" value="PROTEIN-L-ISOASPARTATE(D-ASPARTATE) O-METHYLTRANSFERASE"/>
    <property type="match status" value="1"/>
</dbReference>
<dbReference type="Pfam" id="PF01135">
    <property type="entry name" value="PCMT"/>
    <property type="match status" value="1"/>
</dbReference>
<dbReference type="SUPFAM" id="SSF53335">
    <property type="entry name" value="S-adenosyl-L-methionine-dependent methyltransferases"/>
    <property type="match status" value="1"/>
</dbReference>
<accession>Q07N42</accession>
<proteinExistence type="inferred from homology"/>
<evidence type="ECO:0000255" key="1">
    <source>
        <dbReference type="HAMAP-Rule" id="MF_00090"/>
    </source>
</evidence>
<comment type="function">
    <text evidence="1">Catalyzes the methyl esterification of L-isoaspartyl residues in peptides and proteins that result from spontaneous decomposition of normal L-aspartyl and L-asparaginyl residues. It plays a role in the repair and/or degradation of damaged proteins.</text>
</comment>
<comment type="catalytic activity">
    <reaction evidence="1">
        <text>[protein]-L-isoaspartate + S-adenosyl-L-methionine = [protein]-L-isoaspartate alpha-methyl ester + S-adenosyl-L-homocysteine</text>
        <dbReference type="Rhea" id="RHEA:12705"/>
        <dbReference type="Rhea" id="RHEA-COMP:12143"/>
        <dbReference type="Rhea" id="RHEA-COMP:12144"/>
        <dbReference type="ChEBI" id="CHEBI:57856"/>
        <dbReference type="ChEBI" id="CHEBI:59789"/>
        <dbReference type="ChEBI" id="CHEBI:90596"/>
        <dbReference type="ChEBI" id="CHEBI:90598"/>
        <dbReference type="EC" id="2.1.1.77"/>
    </reaction>
</comment>
<comment type="subcellular location">
    <subcellularLocation>
        <location evidence="1">Cytoplasm</location>
    </subcellularLocation>
</comment>
<comment type="similarity">
    <text evidence="1">Belongs to the methyltransferase superfamily. L-isoaspartyl/D-aspartyl protein methyltransferase family.</text>
</comment>
<keyword id="KW-0963">Cytoplasm</keyword>
<keyword id="KW-0489">Methyltransferase</keyword>
<keyword id="KW-0949">S-adenosyl-L-methionine</keyword>
<keyword id="KW-0808">Transferase</keyword>
<gene>
    <name evidence="1" type="primary">pcm</name>
    <name type="ordered locus">RPE_2705</name>
</gene>
<organism>
    <name type="scientific">Rhodopseudomonas palustris (strain BisA53)</name>
    <dbReference type="NCBI Taxonomy" id="316055"/>
    <lineage>
        <taxon>Bacteria</taxon>
        <taxon>Pseudomonadati</taxon>
        <taxon>Pseudomonadota</taxon>
        <taxon>Alphaproteobacteria</taxon>
        <taxon>Hyphomicrobiales</taxon>
        <taxon>Nitrobacteraceae</taxon>
        <taxon>Rhodopseudomonas</taxon>
    </lineage>
</organism>